<evidence type="ECO:0000250" key="1">
    <source>
        <dbReference type="UniProtKB" id="O74312"/>
    </source>
</evidence>
<evidence type="ECO:0000250" key="2">
    <source>
        <dbReference type="UniProtKB" id="Q12142"/>
    </source>
</evidence>
<evidence type="ECO:0000255" key="3"/>
<evidence type="ECO:0000256" key="4">
    <source>
        <dbReference type="SAM" id="MobiDB-lite"/>
    </source>
</evidence>
<evidence type="ECO:0000305" key="5"/>
<name>ATG9_EREGS</name>
<protein>
    <recommendedName>
        <fullName>Autophagy-related protein 9</fullName>
    </recommendedName>
</protein>
<keyword id="KW-0072">Autophagy</keyword>
<keyword id="KW-0968">Cytoplasmic vesicle</keyword>
<keyword id="KW-0256">Endoplasmic reticulum</keyword>
<keyword id="KW-0333">Golgi apparatus</keyword>
<keyword id="KW-0445">Lipid transport</keyword>
<keyword id="KW-0472">Membrane</keyword>
<keyword id="KW-0597">Phosphoprotein</keyword>
<keyword id="KW-1185">Reference proteome</keyword>
<keyword id="KW-0812">Transmembrane</keyword>
<keyword id="KW-1133">Transmembrane helix</keyword>
<keyword id="KW-0813">Transport</keyword>
<feature type="chain" id="PRO_0000119824" description="Autophagy-related protein 9">
    <location>
        <begin position="1"/>
        <end position="897"/>
    </location>
</feature>
<feature type="topological domain" description="Cytoplasmic" evidence="5">
    <location>
        <begin position="1"/>
        <end position="256"/>
    </location>
</feature>
<feature type="transmembrane region" description="Helical" evidence="3">
    <location>
        <begin position="257"/>
        <end position="277"/>
    </location>
</feature>
<feature type="topological domain" description="Lumenal" evidence="5">
    <location>
        <begin position="278"/>
        <end position="314"/>
    </location>
</feature>
<feature type="transmembrane region" description="Helical" evidence="3">
    <location>
        <begin position="315"/>
        <end position="335"/>
    </location>
</feature>
<feature type="topological domain" description="Cytoplasmic" evidence="5">
    <location>
        <begin position="336"/>
        <end position="431"/>
    </location>
</feature>
<feature type="intramembrane region" evidence="1">
    <location>
        <begin position="432"/>
        <end position="452"/>
    </location>
</feature>
<feature type="topological domain" description="Cytoplasmic" evidence="5">
    <location>
        <begin position="453"/>
        <end position="472"/>
    </location>
</feature>
<feature type="transmembrane region" description="Helical" evidence="3">
    <location>
        <begin position="473"/>
        <end position="493"/>
    </location>
</feature>
<feature type="topological domain" description="Lumenal" evidence="5">
    <location>
        <begin position="494"/>
        <end position="558"/>
    </location>
</feature>
<feature type="transmembrane region" description="Helical" evidence="3">
    <location>
        <begin position="559"/>
        <end position="579"/>
    </location>
</feature>
<feature type="topological domain" description="Cytoplasmic" evidence="5">
    <location>
        <begin position="580"/>
        <end position="661"/>
    </location>
</feature>
<feature type="intramembrane region" evidence="1">
    <location>
        <begin position="662"/>
        <end position="682"/>
    </location>
</feature>
<feature type="topological domain" description="Cytoplasmic" evidence="5">
    <location>
        <begin position="683"/>
        <end position="897"/>
    </location>
</feature>
<feature type="region of interest" description="Disordered" evidence="4">
    <location>
        <begin position="46"/>
        <end position="106"/>
    </location>
</feature>
<feature type="region of interest" description="Disordered" evidence="4">
    <location>
        <begin position="112"/>
        <end position="131"/>
    </location>
</feature>
<feature type="region of interest" description="Disordered" evidence="4">
    <location>
        <begin position="195"/>
        <end position="224"/>
    </location>
</feature>
<feature type="compositionally biased region" description="Polar residues" evidence="4">
    <location>
        <begin position="80"/>
        <end position="93"/>
    </location>
</feature>
<feature type="compositionally biased region" description="Low complexity" evidence="4">
    <location>
        <begin position="214"/>
        <end position="224"/>
    </location>
</feature>
<organism>
    <name type="scientific">Eremothecium gossypii (strain ATCC 10895 / CBS 109.51 / FGSC 9923 / NRRL Y-1056)</name>
    <name type="common">Yeast</name>
    <name type="synonym">Ashbya gossypii</name>
    <dbReference type="NCBI Taxonomy" id="284811"/>
    <lineage>
        <taxon>Eukaryota</taxon>
        <taxon>Fungi</taxon>
        <taxon>Dikarya</taxon>
        <taxon>Ascomycota</taxon>
        <taxon>Saccharomycotina</taxon>
        <taxon>Saccharomycetes</taxon>
        <taxon>Saccharomycetales</taxon>
        <taxon>Saccharomycetaceae</taxon>
        <taxon>Eremothecium</taxon>
    </lineage>
</organism>
<accession>Q75A48</accession>
<gene>
    <name type="primary">ATG9</name>
    <name type="ordered locus">ADR071W</name>
</gene>
<sequence length="897" mass="102811">MEQSEDTIQHERKNTFLSRVFGVHSSEVGDSIETAELSQYPIQIARSGSNAIDESRVIESDQASSSEEEDTDGHDLSVAENMTSYNGAQGSGSEDSDVPFSDQELETIETYTIAKVGQGSSSEDDRLQADSAEEEDALLFQHRLQDGSKGRNKVSSQPLGLKRILGSKGKSILGKEPASQEDSFIFRKGPTWDEENQLRPESKRPGLLSGKSNARLSSPSRPSPLSARERALWKWANVENLDGFLQDVYSYYLGNGFYCIMIEKILNLLTLLFIVFISTYMSHCIDYSKLPNGHKFSDVRVDQCYETQITGTTKLLFWIFGVFVVLKVVQMYFDFRRIHEIHNFYTYLLNISDKELQTIPWQSVIHQIMRLKDQNAVTANVVEVKAKNHIDAHDVANRIMRKENYLIALYNKDILHLSLPIPLYRTSTLTKTLEWNIHLCIIGFAFNEAGFLKQSFLNPAQREFLSEELKKRFILAGFLNIILAPFLVVYFVLLYFFRYFNEYKTSPGSLSTRQYTPIAEWKFREYNELYHLFKKRMGLSYEVANTYINQFPNALGDYFFKFVKFISGSFVAILALMTVLDPENFLNFELTADRTVLFYMTVLGTIWAVCHSAVNDNCSVFDPEDSLKELITYIHYAPKEWDGRYHTDEVKQEFCKLYNLRVILLLRELASLIMTPFILWFSLPNSAESIVDFFREVTVYGDGLGYVCKYAMFDENCKKGLRTNKHLQGTQTKYGHSLGDDHDSSDEETDKGMNKMIQSYMYFVDDYQNSVNAVGKYQIPKTQNLSHESKYNMKSHQHYSWKKQFKLGSKPEDFKIGSVTPRALSSSILANKPKSNLRARLDPEISHSNVQFDDLGESFINSIPVADYDPIERSDAMGGNGVLGLLNQYYRKSDVGR</sequence>
<dbReference type="EMBL" id="AE016817">
    <property type="protein sequence ID" value="AAS51991.1"/>
    <property type="molecule type" value="Genomic_DNA"/>
</dbReference>
<dbReference type="RefSeq" id="NP_984167.1">
    <property type="nucleotide sequence ID" value="NM_209520.1"/>
</dbReference>
<dbReference type="SMR" id="Q75A48"/>
<dbReference type="FunCoup" id="Q75A48">
    <property type="interactions" value="267"/>
</dbReference>
<dbReference type="STRING" id="284811.Q75A48"/>
<dbReference type="EnsemblFungi" id="AAS51991">
    <property type="protein sequence ID" value="AAS51991"/>
    <property type="gene ID" value="AGOS_ADR071W"/>
</dbReference>
<dbReference type="GeneID" id="4620316"/>
<dbReference type="KEGG" id="ago:AGOS_ADR071W"/>
<dbReference type="eggNOG" id="KOG2173">
    <property type="taxonomic scope" value="Eukaryota"/>
</dbReference>
<dbReference type="HOGENOM" id="CLU_006200_1_0_1"/>
<dbReference type="InParanoid" id="Q75A48"/>
<dbReference type="OMA" id="IAEWKFR"/>
<dbReference type="OrthoDB" id="2020634at2759"/>
<dbReference type="Proteomes" id="UP000000591">
    <property type="component" value="Chromosome IV"/>
</dbReference>
<dbReference type="GO" id="GO:0005776">
    <property type="term" value="C:autophagosome"/>
    <property type="evidence" value="ECO:0000318"/>
    <property type="project" value="GO_Central"/>
</dbReference>
<dbReference type="GO" id="GO:0030659">
    <property type="term" value="C:cytoplasmic vesicle membrane"/>
    <property type="evidence" value="ECO:0007669"/>
    <property type="project" value="UniProtKB-SubCell"/>
</dbReference>
<dbReference type="GO" id="GO:0005789">
    <property type="term" value="C:endoplasmic reticulum membrane"/>
    <property type="evidence" value="ECO:0007669"/>
    <property type="project" value="UniProtKB-SubCell"/>
</dbReference>
<dbReference type="GO" id="GO:0000139">
    <property type="term" value="C:Golgi membrane"/>
    <property type="evidence" value="ECO:0007669"/>
    <property type="project" value="UniProtKB-SubCell"/>
</dbReference>
<dbReference type="GO" id="GO:0005739">
    <property type="term" value="C:mitochondrion"/>
    <property type="evidence" value="ECO:0007669"/>
    <property type="project" value="EnsemblFungi"/>
</dbReference>
<dbReference type="GO" id="GO:0061908">
    <property type="term" value="C:phagophore"/>
    <property type="evidence" value="ECO:0007669"/>
    <property type="project" value="EnsemblFungi"/>
</dbReference>
<dbReference type="GO" id="GO:0000407">
    <property type="term" value="C:phagophore assembly site"/>
    <property type="evidence" value="ECO:0000318"/>
    <property type="project" value="GO_Central"/>
</dbReference>
<dbReference type="GO" id="GO:0034045">
    <property type="term" value="C:phagophore assembly site membrane"/>
    <property type="evidence" value="ECO:0007669"/>
    <property type="project" value="UniProtKB-SubCell"/>
</dbReference>
<dbReference type="GO" id="GO:0017128">
    <property type="term" value="F:phospholipid scramblase activity"/>
    <property type="evidence" value="ECO:0007669"/>
    <property type="project" value="EnsemblFungi"/>
</dbReference>
<dbReference type="GO" id="GO:0032258">
    <property type="term" value="P:cytoplasm to vacuole targeting by the Cvt pathway"/>
    <property type="evidence" value="ECO:0007669"/>
    <property type="project" value="EnsemblFungi"/>
</dbReference>
<dbReference type="GO" id="GO:0000423">
    <property type="term" value="P:mitophagy"/>
    <property type="evidence" value="ECO:0000318"/>
    <property type="project" value="GO_Central"/>
</dbReference>
<dbReference type="GO" id="GO:0034727">
    <property type="term" value="P:piecemeal microautophagy of the nucleus"/>
    <property type="evidence" value="ECO:0000318"/>
    <property type="project" value="GO_Central"/>
</dbReference>
<dbReference type="GO" id="GO:0034497">
    <property type="term" value="P:protein localization to phagophore assembly site"/>
    <property type="evidence" value="ECO:0000318"/>
    <property type="project" value="GO_Central"/>
</dbReference>
<dbReference type="GO" id="GO:0061709">
    <property type="term" value="P:reticulophagy"/>
    <property type="evidence" value="ECO:0000318"/>
    <property type="project" value="GO_Central"/>
</dbReference>
<dbReference type="InterPro" id="IPR007241">
    <property type="entry name" value="Autophagy-rel_prot_9"/>
</dbReference>
<dbReference type="PANTHER" id="PTHR13038">
    <property type="entry name" value="APG9 AUTOPHAGY 9"/>
    <property type="match status" value="1"/>
</dbReference>
<dbReference type="PANTHER" id="PTHR13038:SF10">
    <property type="entry name" value="AUTOPHAGY-RELATED PROTEIN 9"/>
    <property type="match status" value="1"/>
</dbReference>
<dbReference type="Pfam" id="PF04109">
    <property type="entry name" value="ATG9"/>
    <property type="match status" value="1"/>
</dbReference>
<comment type="function">
    <text evidence="2">Phospholipid scramblase involved in autophagy and cytoplasm to vacuole transport (Cvt) vesicle formation. Cycles between the preautophagosomal structure/phagophore assembly site (PAS) and the cytoplasmic vesicle pool and supplies membrane for the growing autophagosome. Lipid scramblase activity plays a key role in preautophagosomal structure/phagophore assembly by distributing the phospholipids that arrive through ATG2 from the cytoplasmic to the luminal leaflet of the bilayer, thereby driving autophagosomal membrane expansion. Required for mitophagy. Also involved in endoplasmic reticulum-specific autophagic process and is essential for the survival of cells subjected to severe ER stress. Different machineries are required for anterograde trafficking to the PAS during either the Cvt pathway or bulk autophagy and for retrograde trafficking.</text>
</comment>
<comment type="catalytic activity">
    <reaction evidence="2">
        <text>a 1,2-diacyl-sn-glycero-3-phosphocholine(in) = a 1,2-diacyl-sn-glycero-3-phosphocholine(out)</text>
        <dbReference type="Rhea" id="RHEA:38571"/>
        <dbReference type="ChEBI" id="CHEBI:57643"/>
    </reaction>
</comment>
<comment type="catalytic activity">
    <reaction evidence="2">
        <text>a 1,2-diacyl-sn-glycero-3-phospho-L-serine(in) = a 1,2-diacyl-sn-glycero-3-phospho-L-serine(out)</text>
        <dbReference type="Rhea" id="RHEA:38663"/>
        <dbReference type="ChEBI" id="CHEBI:57262"/>
    </reaction>
</comment>
<comment type="catalytic activity">
    <reaction evidence="2">
        <text>a 1,2-diacyl-sn-glycero-3-phosphoethanolamine(in) = a 1,2-diacyl-sn-glycero-3-phosphoethanolamine(out)</text>
        <dbReference type="Rhea" id="RHEA:38895"/>
        <dbReference type="ChEBI" id="CHEBI:64612"/>
    </reaction>
</comment>
<comment type="catalytic activity">
    <reaction evidence="2">
        <text>a 1,2-diacyl-sn-glycero-3-phospho-(1D-myo-inositol-3-phosphate)(in) = a 1,2-diacyl-sn-glycero-3-phospho-(1D-myo-inositol-3-phosphate)(out)</text>
        <dbReference type="Rhea" id="RHEA:67920"/>
        <dbReference type="ChEBI" id="CHEBI:58088"/>
    </reaction>
</comment>
<comment type="subunit">
    <text evidence="1">Homotrimer; forms a homotrimer with a central pore that forms a path between the two membrane leaflets.</text>
</comment>
<comment type="subcellular location">
    <subcellularLocation>
        <location evidence="2">Preautophagosomal structure membrane</location>
        <topology evidence="2">Multi-pass membrane protein</topology>
    </subcellularLocation>
    <subcellularLocation>
        <location evidence="2">Cytoplasmic vesicle membrane</location>
        <topology evidence="2">Multi-pass membrane protein</topology>
    </subcellularLocation>
    <subcellularLocation>
        <location evidence="2">Golgi apparatus membrane</location>
        <topology evidence="2">Multi-pass membrane protein</topology>
    </subcellularLocation>
    <subcellularLocation>
        <location evidence="2">Endoplasmic reticulum membrane</location>
        <topology evidence="2">Multi-pass membrane protein</topology>
    </subcellularLocation>
</comment>
<comment type="domain">
    <text evidence="1">Forms a homotrimer with a solvated central pore, which is connected laterally to the cytosol through the cavity within each protomer. Acts as a lipid scramblase that uses its central pore to function: the central pore opens laterally to accommodate lipid headgroups, thereby enabling lipid flipping and redistribution of lipids added to the outer leaflet of ATG9-containing vesicles, thereby enabling growth into autophagosomes.</text>
</comment>
<comment type="PTM">
    <text evidence="2">Phosphorylated by ATG1. ATG1 phosphorylation is required for preautophagosome elongation.</text>
</comment>
<comment type="similarity">
    <text evidence="5">Belongs to the ATG9 family.</text>
</comment>
<proteinExistence type="inferred from homology"/>
<reference key="1">
    <citation type="journal article" date="2004" name="Science">
        <title>The Ashbya gossypii genome as a tool for mapping the ancient Saccharomyces cerevisiae genome.</title>
        <authorList>
            <person name="Dietrich F.S."/>
            <person name="Voegeli S."/>
            <person name="Brachat S."/>
            <person name="Lerch A."/>
            <person name="Gates K."/>
            <person name="Steiner S."/>
            <person name="Mohr C."/>
            <person name="Poehlmann R."/>
            <person name="Luedi P."/>
            <person name="Choi S."/>
            <person name="Wing R.A."/>
            <person name="Flavier A."/>
            <person name="Gaffney T.D."/>
            <person name="Philippsen P."/>
        </authorList>
    </citation>
    <scope>NUCLEOTIDE SEQUENCE [LARGE SCALE GENOMIC DNA]</scope>
    <source>
        <strain>ATCC 10895 / CBS 109.51 / FGSC 9923 / NRRL Y-1056</strain>
    </source>
</reference>
<reference key="2">
    <citation type="journal article" date="2013" name="G3 (Bethesda)">
        <title>Genomes of Ashbya fungi isolated from insects reveal four mating-type loci, numerous translocations, lack of transposons, and distinct gene duplications.</title>
        <authorList>
            <person name="Dietrich F.S."/>
            <person name="Voegeli S."/>
            <person name="Kuo S."/>
            <person name="Philippsen P."/>
        </authorList>
    </citation>
    <scope>GENOME REANNOTATION</scope>
    <source>
        <strain>ATCC 10895 / CBS 109.51 / FGSC 9923 / NRRL Y-1056</strain>
    </source>
</reference>